<comment type="function">
    <text evidence="1">Plays a role in peptidoglycan recycling by cleaving the terminal beta-1,4-linked N-acetylglucosamine (GlcNAc) from peptide-linked peptidoglycan fragments, giving rise to free GlcNAc, anhydro-N-acetylmuramic acid and anhydro-N-acetylmuramic acid-linked peptides.</text>
</comment>
<comment type="catalytic activity">
    <reaction evidence="1">
        <text>Hydrolysis of terminal non-reducing N-acetyl-D-hexosamine residues in N-acetyl-beta-D-hexosaminides.</text>
        <dbReference type="EC" id="3.2.1.52"/>
    </reaction>
</comment>
<comment type="pathway">
    <text evidence="1">Cell wall biogenesis; peptidoglycan recycling.</text>
</comment>
<comment type="subcellular location">
    <subcellularLocation>
        <location evidence="1">Cytoplasm</location>
    </subcellularLocation>
</comment>
<comment type="similarity">
    <text evidence="1">Belongs to the glycosyl hydrolase 3 family. NagZ subfamily.</text>
</comment>
<proteinExistence type="inferred from homology"/>
<protein>
    <recommendedName>
        <fullName evidence="1">Beta-hexosaminidase</fullName>
        <ecNumber evidence="1">3.2.1.52</ecNumber>
    </recommendedName>
    <alternativeName>
        <fullName evidence="1">Beta-N-acetylhexosaminidase</fullName>
    </alternativeName>
    <alternativeName>
        <fullName evidence="1">N-acetyl-beta-glucosaminidase</fullName>
    </alternativeName>
</protein>
<sequence length="334" mass="35944">MFDLVGPRLSADEREFLCHPAAGGLILFSRNYASPDQMLALVSEVRSLRPDMLIAVDHEGGRVQRFREGFTRLPPASAYLEVAGEAGLAAAETAGWLMAAELRAVGVDFSFAPVLDVDSGISTVIGDRAFARTPEEVTAAARAFATGMRRAGMAAVGKHFPGHGGVAGDSHLVLPEDRRELEELLARDLLPFSALIRENLEGIMPAHVLYSRIDARPPCFSPFWLQTILRERMNFDGAIFSDDLSMAGAAVAGDYAARALAALEAGCDMLVVCNTPEATASILEALENRTASPGSTRRLAAMCGRSRIDRDALLASSEWRNAVDRIHSFNDSAQ</sequence>
<organism>
    <name type="scientific">Methylococcus capsulatus (strain ATCC 33009 / NCIMB 11132 / Bath)</name>
    <dbReference type="NCBI Taxonomy" id="243233"/>
    <lineage>
        <taxon>Bacteria</taxon>
        <taxon>Pseudomonadati</taxon>
        <taxon>Pseudomonadota</taxon>
        <taxon>Gammaproteobacteria</taxon>
        <taxon>Methylococcales</taxon>
        <taxon>Methylococcaceae</taxon>
        <taxon>Methylococcus</taxon>
    </lineage>
</organism>
<keyword id="KW-0131">Cell cycle</keyword>
<keyword id="KW-0132">Cell division</keyword>
<keyword id="KW-0133">Cell shape</keyword>
<keyword id="KW-0961">Cell wall biogenesis/degradation</keyword>
<keyword id="KW-0963">Cytoplasm</keyword>
<keyword id="KW-0326">Glycosidase</keyword>
<keyword id="KW-0378">Hydrolase</keyword>
<keyword id="KW-0573">Peptidoglycan synthesis</keyword>
<keyword id="KW-1185">Reference proteome</keyword>
<name>NAGZ_METCA</name>
<dbReference type="EC" id="3.2.1.52" evidence="1"/>
<dbReference type="EMBL" id="AE017282">
    <property type="protein sequence ID" value="AAU91985.1"/>
    <property type="molecule type" value="Genomic_DNA"/>
</dbReference>
<dbReference type="SMR" id="Q606N2"/>
<dbReference type="STRING" id="243233.MCA1984"/>
<dbReference type="CAZy" id="GH3">
    <property type="family name" value="Glycoside Hydrolase Family 3"/>
</dbReference>
<dbReference type="KEGG" id="mca:MCA1984"/>
<dbReference type="eggNOG" id="COG1472">
    <property type="taxonomic scope" value="Bacteria"/>
</dbReference>
<dbReference type="HOGENOM" id="CLU_008392_0_0_6"/>
<dbReference type="UniPathway" id="UPA00544"/>
<dbReference type="Proteomes" id="UP000006821">
    <property type="component" value="Chromosome"/>
</dbReference>
<dbReference type="GO" id="GO:0005737">
    <property type="term" value="C:cytoplasm"/>
    <property type="evidence" value="ECO:0007669"/>
    <property type="project" value="UniProtKB-SubCell"/>
</dbReference>
<dbReference type="GO" id="GO:0004563">
    <property type="term" value="F:beta-N-acetylhexosaminidase activity"/>
    <property type="evidence" value="ECO:0007669"/>
    <property type="project" value="UniProtKB-UniRule"/>
</dbReference>
<dbReference type="GO" id="GO:0005975">
    <property type="term" value="P:carbohydrate metabolic process"/>
    <property type="evidence" value="ECO:0007669"/>
    <property type="project" value="InterPro"/>
</dbReference>
<dbReference type="GO" id="GO:0051301">
    <property type="term" value="P:cell division"/>
    <property type="evidence" value="ECO:0007669"/>
    <property type="project" value="UniProtKB-KW"/>
</dbReference>
<dbReference type="GO" id="GO:0071555">
    <property type="term" value="P:cell wall organization"/>
    <property type="evidence" value="ECO:0007669"/>
    <property type="project" value="UniProtKB-KW"/>
</dbReference>
<dbReference type="GO" id="GO:0009252">
    <property type="term" value="P:peptidoglycan biosynthetic process"/>
    <property type="evidence" value="ECO:0007669"/>
    <property type="project" value="UniProtKB-KW"/>
</dbReference>
<dbReference type="GO" id="GO:0009254">
    <property type="term" value="P:peptidoglycan turnover"/>
    <property type="evidence" value="ECO:0007669"/>
    <property type="project" value="UniProtKB-UniRule"/>
</dbReference>
<dbReference type="GO" id="GO:0008360">
    <property type="term" value="P:regulation of cell shape"/>
    <property type="evidence" value="ECO:0007669"/>
    <property type="project" value="UniProtKB-KW"/>
</dbReference>
<dbReference type="FunFam" id="3.20.20.300:FF:000001">
    <property type="entry name" value="Beta-hexosaminidase"/>
    <property type="match status" value="1"/>
</dbReference>
<dbReference type="Gene3D" id="3.20.20.300">
    <property type="entry name" value="Glycoside hydrolase, family 3, N-terminal domain"/>
    <property type="match status" value="1"/>
</dbReference>
<dbReference type="HAMAP" id="MF_00364">
    <property type="entry name" value="NagZ"/>
    <property type="match status" value="1"/>
</dbReference>
<dbReference type="InterPro" id="IPR022956">
    <property type="entry name" value="Beta_hexosaminidase_bac"/>
</dbReference>
<dbReference type="InterPro" id="IPR001764">
    <property type="entry name" value="Glyco_hydro_3_N"/>
</dbReference>
<dbReference type="InterPro" id="IPR036962">
    <property type="entry name" value="Glyco_hydro_3_N_sf"/>
</dbReference>
<dbReference type="InterPro" id="IPR017853">
    <property type="entry name" value="Glycoside_hydrolase_SF"/>
</dbReference>
<dbReference type="InterPro" id="IPR050226">
    <property type="entry name" value="NagZ_Beta-hexosaminidase"/>
</dbReference>
<dbReference type="NCBIfam" id="NF003740">
    <property type="entry name" value="PRK05337.1"/>
    <property type="match status" value="1"/>
</dbReference>
<dbReference type="PANTHER" id="PTHR30480:SF13">
    <property type="entry name" value="BETA-HEXOSAMINIDASE"/>
    <property type="match status" value="1"/>
</dbReference>
<dbReference type="PANTHER" id="PTHR30480">
    <property type="entry name" value="BETA-HEXOSAMINIDASE-RELATED"/>
    <property type="match status" value="1"/>
</dbReference>
<dbReference type="Pfam" id="PF00933">
    <property type="entry name" value="Glyco_hydro_3"/>
    <property type="match status" value="1"/>
</dbReference>
<dbReference type="SUPFAM" id="SSF51445">
    <property type="entry name" value="(Trans)glycosidases"/>
    <property type="match status" value="1"/>
</dbReference>
<evidence type="ECO:0000255" key="1">
    <source>
        <dbReference type="HAMAP-Rule" id="MF_00364"/>
    </source>
</evidence>
<reference key="1">
    <citation type="journal article" date="2004" name="PLoS Biol.">
        <title>Genomic insights into methanotrophy: the complete genome sequence of Methylococcus capsulatus (Bath).</title>
        <authorList>
            <person name="Ward N.L."/>
            <person name="Larsen O."/>
            <person name="Sakwa J."/>
            <person name="Bruseth L."/>
            <person name="Khouri H.M."/>
            <person name="Durkin A.S."/>
            <person name="Dimitrov G."/>
            <person name="Jiang L."/>
            <person name="Scanlan D."/>
            <person name="Kang K.H."/>
            <person name="Lewis M.R."/>
            <person name="Nelson K.E."/>
            <person name="Methe B.A."/>
            <person name="Wu M."/>
            <person name="Heidelberg J.F."/>
            <person name="Paulsen I.T."/>
            <person name="Fouts D.E."/>
            <person name="Ravel J."/>
            <person name="Tettelin H."/>
            <person name="Ren Q."/>
            <person name="Read T.D."/>
            <person name="DeBoy R.T."/>
            <person name="Seshadri R."/>
            <person name="Salzberg S.L."/>
            <person name="Jensen H.B."/>
            <person name="Birkeland N.K."/>
            <person name="Nelson W.C."/>
            <person name="Dodson R.J."/>
            <person name="Grindhaug S.H."/>
            <person name="Holt I.E."/>
            <person name="Eidhammer I."/>
            <person name="Jonasen I."/>
            <person name="Vanaken S."/>
            <person name="Utterback T.R."/>
            <person name="Feldblyum T.V."/>
            <person name="Fraser C.M."/>
            <person name="Lillehaug J.R."/>
            <person name="Eisen J.A."/>
        </authorList>
    </citation>
    <scope>NUCLEOTIDE SEQUENCE [LARGE SCALE GENOMIC DNA]</scope>
    <source>
        <strain>ATCC 33009 / NCIMB 11132 / Bath</strain>
    </source>
</reference>
<feature type="chain" id="PRO_0000234916" description="Beta-hexosaminidase">
    <location>
        <begin position="1"/>
        <end position="334"/>
    </location>
</feature>
<feature type="active site" description="Proton donor/acceptor" evidence="1">
    <location>
        <position position="171"/>
    </location>
</feature>
<feature type="active site" description="Nucleophile" evidence="1">
    <location>
        <position position="242"/>
    </location>
</feature>
<feature type="binding site" evidence="1">
    <location>
        <position position="57"/>
    </location>
    <ligand>
        <name>substrate</name>
    </ligand>
</feature>
<feature type="binding site" evidence="1">
    <location>
        <position position="65"/>
    </location>
    <ligand>
        <name>substrate</name>
    </ligand>
</feature>
<feature type="binding site" evidence="1">
    <location>
        <position position="128"/>
    </location>
    <ligand>
        <name>substrate</name>
    </ligand>
</feature>
<feature type="binding site" evidence="1">
    <location>
        <begin position="158"/>
        <end position="159"/>
    </location>
    <ligand>
        <name>substrate</name>
    </ligand>
</feature>
<feature type="site" description="Important for catalytic activity" evidence="1">
    <location>
        <position position="169"/>
    </location>
</feature>
<accession>Q606N2</accession>
<gene>
    <name evidence="1" type="primary">nagZ</name>
    <name type="ordered locus">MCA1984</name>
</gene>